<proteinExistence type="inferred from homology"/>
<feature type="chain" id="PRO_1000079281" description="Exodeoxyribonuclease 7 small subunit">
    <location>
        <begin position="1"/>
        <end position="72"/>
    </location>
</feature>
<name>EX7S_CLOK5</name>
<evidence type="ECO:0000255" key="1">
    <source>
        <dbReference type="HAMAP-Rule" id="MF_00337"/>
    </source>
</evidence>
<gene>
    <name evidence="1" type="primary">xseB</name>
    <name type="ordered locus">CKL_1229</name>
</gene>
<reference key="1">
    <citation type="journal article" date="2008" name="Proc. Natl. Acad. Sci. U.S.A.">
        <title>The genome of Clostridium kluyveri, a strict anaerobe with unique metabolic features.</title>
        <authorList>
            <person name="Seedorf H."/>
            <person name="Fricke W.F."/>
            <person name="Veith B."/>
            <person name="Brueggemann H."/>
            <person name="Liesegang H."/>
            <person name="Strittmatter A."/>
            <person name="Miethke M."/>
            <person name="Buckel W."/>
            <person name="Hinderberger J."/>
            <person name="Li F."/>
            <person name="Hagemeier C."/>
            <person name="Thauer R.K."/>
            <person name="Gottschalk G."/>
        </authorList>
    </citation>
    <scope>NUCLEOTIDE SEQUENCE [LARGE SCALE GENOMIC DNA]</scope>
    <source>
        <strain>ATCC 8527 / DSM 555 / NBRC 12016 / NCIMB 10680 / K1</strain>
    </source>
</reference>
<keyword id="KW-0963">Cytoplasm</keyword>
<keyword id="KW-0269">Exonuclease</keyword>
<keyword id="KW-0378">Hydrolase</keyword>
<keyword id="KW-0540">Nuclease</keyword>
<keyword id="KW-1185">Reference proteome</keyword>
<sequence>MPRKTETYKSIMLKLENIVASMDSSELSLENSLKSYEEGVKLCNKLYKILNEAEEKIKVLTEEGERDFDIES</sequence>
<dbReference type="EC" id="3.1.11.6" evidence="1"/>
<dbReference type="EMBL" id="CP000673">
    <property type="protein sequence ID" value="EDK33271.1"/>
    <property type="molecule type" value="Genomic_DNA"/>
</dbReference>
<dbReference type="RefSeq" id="WP_012101612.1">
    <property type="nucleotide sequence ID" value="NC_009706.1"/>
</dbReference>
<dbReference type="SMR" id="A5N7J0"/>
<dbReference type="STRING" id="431943.CKL_1229"/>
<dbReference type="KEGG" id="ckl:CKL_1229"/>
<dbReference type="eggNOG" id="COG1722">
    <property type="taxonomic scope" value="Bacteria"/>
</dbReference>
<dbReference type="HOGENOM" id="CLU_145918_3_2_9"/>
<dbReference type="Proteomes" id="UP000002411">
    <property type="component" value="Chromosome"/>
</dbReference>
<dbReference type="GO" id="GO:0005829">
    <property type="term" value="C:cytosol"/>
    <property type="evidence" value="ECO:0007669"/>
    <property type="project" value="TreeGrafter"/>
</dbReference>
<dbReference type="GO" id="GO:0009318">
    <property type="term" value="C:exodeoxyribonuclease VII complex"/>
    <property type="evidence" value="ECO:0007669"/>
    <property type="project" value="InterPro"/>
</dbReference>
<dbReference type="GO" id="GO:0008855">
    <property type="term" value="F:exodeoxyribonuclease VII activity"/>
    <property type="evidence" value="ECO:0007669"/>
    <property type="project" value="UniProtKB-UniRule"/>
</dbReference>
<dbReference type="GO" id="GO:0006308">
    <property type="term" value="P:DNA catabolic process"/>
    <property type="evidence" value="ECO:0007669"/>
    <property type="project" value="UniProtKB-UniRule"/>
</dbReference>
<dbReference type="Gene3D" id="1.10.287.1040">
    <property type="entry name" value="Exonuclease VII, small subunit"/>
    <property type="match status" value="1"/>
</dbReference>
<dbReference type="HAMAP" id="MF_00337">
    <property type="entry name" value="Exonuc_7_S"/>
    <property type="match status" value="1"/>
</dbReference>
<dbReference type="InterPro" id="IPR003761">
    <property type="entry name" value="Exonuc_VII_S"/>
</dbReference>
<dbReference type="InterPro" id="IPR037004">
    <property type="entry name" value="Exonuc_VII_ssu_sf"/>
</dbReference>
<dbReference type="NCBIfam" id="NF002140">
    <property type="entry name" value="PRK00977.1-4"/>
    <property type="match status" value="1"/>
</dbReference>
<dbReference type="NCBIfam" id="TIGR01280">
    <property type="entry name" value="xseB"/>
    <property type="match status" value="1"/>
</dbReference>
<dbReference type="PANTHER" id="PTHR34137">
    <property type="entry name" value="EXODEOXYRIBONUCLEASE 7 SMALL SUBUNIT"/>
    <property type="match status" value="1"/>
</dbReference>
<dbReference type="PANTHER" id="PTHR34137:SF1">
    <property type="entry name" value="EXODEOXYRIBONUCLEASE 7 SMALL SUBUNIT"/>
    <property type="match status" value="1"/>
</dbReference>
<dbReference type="Pfam" id="PF02609">
    <property type="entry name" value="Exonuc_VII_S"/>
    <property type="match status" value="1"/>
</dbReference>
<dbReference type="PIRSF" id="PIRSF006488">
    <property type="entry name" value="Exonuc_VII_S"/>
    <property type="match status" value="1"/>
</dbReference>
<dbReference type="SUPFAM" id="SSF116842">
    <property type="entry name" value="XseB-like"/>
    <property type="match status" value="1"/>
</dbReference>
<comment type="function">
    <text evidence="1">Bidirectionally degrades single-stranded DNA into large acid-insoluble oligonucleotides, which are then degraded further into small acid-soluble oligonucleotides.</text>
</comment>
<comment type="catalytic activity">
    <reaction evidence="1">
        <text>Exonucleolytic cleavage in either 5'- to 3'- or 3'- to 5'-direction to yield nucleoside 5'-phosphates.</text>
        <dbReference type="EC" id="3.1.11.6"/>
    </reaction>
</comment>
<comment type="subunit">
    <text evidence="1">Heterooligomer composed of large and small subunits.</text>
</comment>
<comment type="subcellular location">
    <subcellularLocation>
        <location evidence="1">Cytoplasm</location>
    </subcellularLocation>
</comment>
<comment type="similarity">
    <text evidence="1">Belongs to the XseB family.</text>
</comment>
<protein>
    <recommendedName>
        <fullName evidence="1">Exodeoxyribonuclease 7 small subunit</fullName>
        <ecNumber evidence="1">3.1.11.6</ecNumber>
    </recommendedName>
    <alternativeName>
        <fullName evidence="1">Exodeoxyribonuclease VII small subunit</fullName>
        <shortName evidence="1">Exonuclease VII small subunit</shortName>
    </alternativeName>
</protein>
<organism>
    <name type="scientific">Clostridium kluyveri (strain ATCC 8527 / DSM 555 / NBRC 12016 / NCIMB 10680 / K1)</name>
    <dbReference type="NCBI Taxonomy" id="431943"/>
    <lineage>
        <taxon>Bacteria</taxon>
        <taxon>Bacillati</taxon>
        <taxon>Bacillota</taxon>
        <taxon>Clostridia</taxon>
        <taxon>Eubacteriales</taxon>
        <taxon>Clostridiaceae</taxon>
        <taxon>Clostridium</taxon>
    </lineage>
</organism>
<accession>A5N7J0</accession>